<gene>
    <name evidence="1" type="primary">rplE</name>
    <name type="ordered locus">BSUIS_A1270</name>
</gene>
<comment type="function">
    <text evidence="1">This is one of the proteins that bind and probably mediate the attachment of the 5S RNA into the large ribosomal subunit, where it forms part of the central protuberance. In the 70S ribosome it contacts protein S13 of the 30S subunit (bridge B1b), connecting the 2 subunits; this bridge is implicated in subunit movement. Contacts the P site tRNA; the 5S rRNA and some of its associated proteins might help stabilize positioning of ribosome-bound tRNAs.</text>
</comment>
<comment type="subunit">
    <text evidence="1">Part of the 50S ribosomal subunit; part of the 5S rRNA/L5/L18/L25 subcomplex. Contacts the 5S rRNA and the P site tRNA. Forms a bridge to the 30S subunit in the 70S ribosome.</text>
</comment>
<comment type="similarity">
    <text evidence="1">Belongs to the universal ribosomal protein uL5 family.</text>
</comment>
<keyword id="KW-0687">Ribonucleoprotein</keyword>
<keyword id="KW-0689">Ribosomal protein</keyword>
<keyword id="KW-0694">RNA-binding</keyword>
<keyword id="KW-0699">rRNA-binding</keyword>
<keyword id="KW-0820">tRNA-binding</keyword>
<dbReference type="EMBL" id="CP000911">
    <property type="protein sequence ID" value="ABY38321.1"/>
    <property type="molecule type" value="Genomic_DNA"/>
</dbReference>
<dbReference type="RefSeq" id="WP_002964350.1">
    <property type="nucleotide sequence ID" value="NC_010169.1"/>
</dbReference>
<dbReference type="SMR" id="B0CH20"/>
<dbReference type="GeneID" id="97533536"/>
<dbReference type="KEGG" id="bmt:BSUIS_A1270"/>
<dbReference type="HOGENOM" id="CLU_061015_2_1_5"/>
<dbReference type="Proteomes" id="UP000008545">
    <property type="component" value="Chromosome I"/>
</dbReference>
<dbReference type="GO" id="GO:1990904">
    <property type="term" value="C:ribonucleoprotein complex"/>
    <property type="evidence" value="ECO:0007669"/>
    <property type="project" value="UniProtKB-KW"/>
</dbReference>
<dbReference type="GO" id="GO:0005840">
    <property type="term" value="C:ribosome"/>
    <property type="evidence" value="ECO:0007669"/>
    <property type="project" value="UniProtKB-KW"/>
</dbReference>
<dbReference type="GO" id="GO:0019843">
    <property type="term" value="F:rRNA binding"/>
    <property type="evidence" value="ECO:0007669"/>
    <property type="project" value="UniProtKB-UniRule"/>
</dbReference>
<dbReference type="GO" id="GO:0003735">
    <property type="term" value="F:structural constituent of ribosome"/>
    <property type="evidence" value="ECO:0007669"/>
    <property type="project" value="InterPro"/>
</dbReference>
<dbReference type="GO" id="GO:0000049">
    <property type="term" value="F:tRNA binding"/>
    <property type="evidence" value="ECO:0007669"/>
    <property type="project" value="UniProtKB-UniRule"/>
</dbReference>
<dbReference type="GO" id="GO:0006412">
    <property type="term" value="P:translation"/>
    <property type="evidence" value="ECO:0007669"/>
    <property type="project" value="UniProtKB-UniRule"/>
</dbReference>
<dbReference type="FunFam" id="3.30.1440.10:FF:000001">
    <property type="entry name" value="50S ribosomal protein L5"/>
    <property type="match status" value="1"/>
</dbReference>
<dbReference type="Gene3D" id="3.30.1440.10">
    <property type="match status" value="1"/>
</dbReference>
<dbReference type="HAMAP" id="MF_01333_B">
    <property type="entry name" value="Ribosomal_uL5_B"/>
    <property type="match status" value="1"/>
</dbReference>
<dbReference type="InterPro" id="IPR002132">
    <property type="entry name" value="Ribosomal_uL5"/>
</dbReference>
<dbReference type="InterPro" id="IPR020930">
    <property type="entry name" value="Ribosomal_uL5_bac-type"/>
</dbReference>
<dbReference type="InterPro" id="IPR031309">
    <property type="entry name" value="Ribosomal_uL5_C"/>
</dbReference>
<dbReference type="InterPro" id="IPR020929">
    <property type="entry name" value="Ribosomal_uL5_CS"/>
</dbReference>
<dbReference type="InterPro" id="IPR022803">
    <property type="entry name" value="Ribosomal_uL5_dom_sf"/>
</dbReference>
<dbReference type="InterPro" id="IPR031310">
    <property type="entry name" value="Ribosomal_uL5_N"/>
</dbReference>
<dbReference type="NCBIfam" id="NF000585">
    <property type="entry name" value="PRK00010.1"/>
    <property type="match status" value="1"/>
</dbReference>
<dbReference type="PANTHER" id="PTHR11994">
    <property type="entry name" value="60S RIBOSOMAL PROTEIN L11-RELATED"/>
    <property type="match status" value="1"/>
</dbReference>
<dbReference type="Pfam" id="PF00281">
    <property type="entry name" value="Ribosomal_L5"/>
    <property type="match status" value="1"/>
</dbReference>
<dbReference type="Pfam" id="PF00673">
    <property type="entry name" value="Ribosomal_L5_C"/>
    <property type="match status" value="1"/>
</dbReference>
<dbReference type="PIRSF" id="PIRSF002161">
    <property type="entry name" value="Ribosomal_L5"/>
    <property type="match status" value="1"/>
</dbReference>
<dbReference type="SUPFAM" id="SSF55282">
    <property type="entry name" value="RL5-like"/>
    <property type="match status" value="1"/>
</dbReference>
<dbReference type="PROSITE" id="PS00358">
    <property type="entry name" value="RIBOSOMAL_L5"/>
    <property type="match status" value="1"/>
</dbReference>
<proteinExistence type="inferred from homology"/>
<accession>B0CH20</accession>
<name>RL5_BRUSI</name>
<protein>
    <recommendedName>
        <fullName evidence="1">Large ribosomal subunit protein uL5</fullName>
    </recommendedName>
    <alternativeName>
        <fullName evidence="2">50S ribosomal protein L5</fullName>
    </alternativeName>
</protein>
<evidence type="ECO:0000255" key="1">
    <source>
        <dbReference type="HAMAP-Rule" id="MF_01333"/>
    </source>
</evidence>
<evidence type="ECO:0000305" key="2"/>
<organism>
    <name type="scientific">Brucella suis (strain ATCC 23445 / NCTC 10510)</name>
    <dbReference type="NCBI Taxonomy" id="470137"/>
    <lineage>
        <taxon>Bacteria</taxon>
        <taxon>Pseudomonadati</taxon>
        <taxon>Pseudomonadota</taxon>
        <taxon>Alphaproteobacteria</taxon>
        <taxon>Hyphomicrobiales</taxon>
        <taxon>Brucellaceae</taxon>
        <taxon>Brucella/Ochrobactrum group</taxon>
        <taxon>Brucella</taxon>
    </lineage>
</organism>
<sequence>MAEAKALPRFKKLYQDNIRKALLEEFKYDNEMQIPRITKVVLNMGVGEATGDSKKPAVAAEDLAMIAGQKAVVTRARNSIATFKLREGMPIGAKVTLRQDRMYEFLDRLITIALPRVRDFRGLNPKSFDGRGNYAMGIKEHIVFPEINYDKVDQIWGMDIIVCTTAKTDDEARSLLRAFNFPFRQ</sequence>
<feature type="chain" id="PRO_1000086582" description="Large ribosomal subunit protein uL5">
    <location>
        <begin position="1"/>
        <end position="185"/>
    </location>
</feature>
<reference key="1">
    <citation type="submission" date="2007-12" db="EMBL/GenBank/DDBJ databases">
        <title>Brucella suis ATCC 23445 whole genome shotgun sequencing project.</title>
        <authorList>
            <person name="Setubal J.C."/>
            <person name="Bowns C."/>
            <person name="Boyle S."/>
            <person name="Crasta O.R."/>
            <person name="Czar M.J."/>
            <person name="Dharmanolla C."/>
            <person name="Gillespie J.J."/>
            <person name="Kenyon R.W."/>
            <person name="Lu J."/>
            <person name="Mane S."/>
            <person name="Mohapatra S."/>
            <person name="Nagrani S."/>
            <person name="Purkayastha A."/>
            <person name="Rajasimha H.K."/>
            <person name="Shallom J.M."/>
            <person name="Shallom S."/>
            <person name="Shukla M."/>
            <person name="Snyder E.E."/>
            <person name="Sobral B.W."/>
            <person name="Wattam A.R."/>
            <person name="Will R."/>
            <person name="Williams K."/>
            <person name="Yoo H."/>
            <person name="Bruce D."/>
            <person name="Detter C."/>
            <person name="Munk C."/>
            <person name="Brettin T.S."/>
        </authorList>
    </citation>
    <scope>NUCLEOTIDE SEQUENCE [LARGE SCALE GENOMIC DNA]</scope>
    <source>
        <strain>ATCC 23445 / NCTC 10510</strain>
    </source>
</reference>